<accession>Q2RK02</accession>
<protein>
    <recommendedName>
        <fullName evidence="1">Large ribosomal subunit protein bL28</fullName>
    </recommendedName>
    <alternativeName>
        <fullName evidence="2">50S ribosomal protein L28</fullName>
    </alternativeName>
</protein>
<sequence>MATCSICGKRAVTGNQVSHSNIKTKRTWAPNLQRVKLLVNGTPRRAYVCTRCLRSGKVQRAI</sequence>
<name>RL28_MOOTA</name>
<comment type="similarity">
    <text evidence="1">Belongs to the bacterial ribosomal protein bL28 family.</text>
</comment>
<evidence type="ECO:0000255" key="1">
    <source>
        <dbReference type="HAMAP-Rule" id="MF_00373"/>
    </source>
</evidence>
<evidence type="ECO:0000305" key="2"/>
<proteinExistence type="inferred from homology"/>
<keyword id="KW-0687">Ribonucleoprotein</keyword>
<keyword id="KW-0689">Ribosomal protein</keyword>
<feature type="chain" id="PRO_1000007278" description="Large ribosomal subunit protein bL28">
    <location>
        <begin position="1"/>
        <end position="62"/>
    </location>
</feature>
<reference key="1">
    <citation type="journal article" date="2008" name="Environ. Microbiol.">
        <title>The complete genome sequence of Moorella thermoacetica (f. Clostridium thermoaceticum).</title>
        <authorList>
            <person name="Pierce E."/>
            <person name="Xie G."/>
            <person name="Barabote R.D."/>
            <person name="Saunders E."/>
            <person name="Han C.S."/>
            <person name="Detter J.C."/>
            <person name="Richardson P."/>
            <person name="Brettin T.S."/>
            <person name="Das A."/>
            <person name="Ljungdahl L.G."/>
            <person name="Ragsdale S.W."/>
        </authorList>
    </citation>
    <scope>NUCLEOTIDE SEQUENCE [LARGE SCALE GENOMIC DNA]</scope>
    <source>
        <strain>ATCC 39073 / JCM 9320</strain>
    </source>
</reference>
<gene>
    <name evidence="1" type="primary">rpmB</name>
    <name type="ordered locus">Moth_0920</name>
</gene>
<dbReference type="EMBL" id="CP000232">
    <property type="protein sequence ID" value="ABC19237.1"/>
    <property type="molecule type" value="Genomic_DNA"/>
</dbReference>
<dbReference type="RefSeq" id="YP_429780.1">
    <property type="nucleotide sequence ID" value="NC_007644.1"/>
</dbReference>
<dbReference type="SMR" id="Q2RK02"/>
<dbReference type="STRING" id="264732.Moth_0920"/>
<dbReference type="EnsemblBacteria" id="ABC19237">
    <property type="protein sequence ID" value="ABC19237"/>
    <property type="gene ID" value="Moth_0920"/>
</dbReference>
<dbReference type="KEGG" id="mta:Moth_0920"/>
<dbReference type="PATRIC" id="fig|264732.11.peg.988"/>
<dbReference type="eggNOG" id="COG0227">
    <property type="taxonomic scope" value="Bacteria"/>
</dbReference>
<dbReference type="HOGENOM" id="CLU_064548_7_0_9"/>
<dbReference type="OrthoDB" id="9805609at2"/>
<dbReference type="GO" id="GO:1990904">
    <property type="term" value="C:ribonucleoprotein complex"/>
    <property type="evidence" value="ECO:0007669"/>
    <property type="project" value="UniProtKB-KW"/>
</dbReference>
<dbReference type="GO" id="GO:0005840">
    <property type="term" value="C:ribosome"/>
    <property type="evidence" value="ECO:0007669"/>
    <property type="project" value="UniProtKB-KW"/>
</dbReference>
<dbReference type="GO" id="GO:0003735">
    <property type="term" value="F:structural constituent of ribosome"/>
    <property type="evidence" value="ECO:0007669"/>
    <property type="project" value="InterPro"/>
</dbReference>
<dbReference type="GO" id="GO:0006412">
    <property type="term" value="P:translation"/>
    <property type="evidence" value="ECO:0007669"/>
    <property type="project" value="UniProtKB-UniRule"/>
</dbReference>
<dbReference type="Gene3D" id="2.30.170.40">
    <property type="entry name" value="Ribosomal protein L28/L24"/>
    <property type="match status" value="1"/>
</dbReference>
<dbReference type="HAMAP" id="MF_00373">
    <property type="entry name" value="Ribosomal_bL28"/>
    <property type="match status" value="1"/>
</dbReference>
<dbReference type="InterPro" id="IPR050096">
    <property type="entry name" value="Bacterial_rp_bL28"/>
</dbReference>
<dbReference type="InterPro" id="IPR026569">
    <property type="entry name" value="Ribosomal_bL28"/>
</dbReference>
<dbReference type="InterPro" id="IPR034704">
    <property type="entry name" value="Ribosomal_bL28/bL31-like_sf"/>
</dbReference>
<dbReference type="InterPro" id="IPR001383">
    <property type="entry name" value="Ribosomal_bL28_bact-type"/>
</dbReference>
<dbReference type="InterPro" id="IPR037147">
    <property type="entry name" value="Ribosomal_bL28_sf"/>
</dbReference>
<dbReference type="NCBIfam" id="TIGR00009">
    <property type="entry name" value="L28"/>
    <property type="match status" value="1"/>
</dbReference>
<dbReference type="PANTHER" id="PTHR39080">
    <property type="entry name" value="50S RIBOSOMAL PROTEIN L28"/>
    <property type="match status" value="1"/>
</dbReference>
<dbReference type="PANTHER" id="PTHR39080:SF1">
    <property type="entry name" value="LARGE RIBOSOMAL SUBUNIT PROTEIN BL28A"/>
    <property type="match status" value="1"/>
</dbReference>
<dbReference type="Pfam" id="PF00830">
    <property type="entry name" value="Ribosomal_L28"/>
    <property type="match status" value="1"/>
</dbReference>
<dbReference type="SUPFAM" id="SSF143800">
    <property type="entry name" value="L28p-like"/>
    <property type="match status" value="1"/>
</dbReference>
<organism>
    <name type="scientific">Moorella thermoacetica (strain ATCC 39073 / JCM 9320)</name>
    <dbReference type="NCBI Taxonomy" id="264732"/>
    <lineage>
        <taxon>Bacteria</taxon>
        <taxon>Bacillati</taxon>
        <taxon>Bacillota</taxon>
        <taxon>Clostridia</taxon>
        <taxon>Moorellales</taxon>
        <taxon>Moorellaceae</taxon>
        <taxon>Moorella</taxon>
    </lineage>
</organism>